<feature type="chain" id="PRO_0000210090" description="Multidrug resistance protein MdtO">
    <location>
        <begin position="1"/>
        <end position="683"/>
    </location>
</feature>
<feature type="transmembrane region" description="Helical" evidence="2">
    <location>
        <begin position="43"/>
        <end position="63"/>
    </location>
</feature>
<feature type="transmembrane region" description="Helical" evidence="2">
    <location>
        <begin position="75"/>
        <end position="95"/>
    </location>
</feature>
<feature type="transmembrane region" description="Helical" evidence="2">
    <location>
        <begin position="100"/>
        <end position="120"/>
    </location>
</feature>
<feature type="transmembrane region" description="Helical" evidence="2">
    <location>
        <begin position="125"/>
        <end position="145"/>
    </location>
</feature>
<feature type="transmembrane region" description="Helical" evidence="2">
    <location>
        <begin position="158"/>
        <end position="178"/>
    </location>
</feature>
<feature type="transmembrane region" description="Helical" evidence="2">
    <location>
        <begin position="402"/>
        <end position="422"/>
    </location>
</feature>
<feature type="transmembrane region" description="Helical" evidence="2">
    <location>
        <begin position="426"/>
        <end position="446"/>
    </location>
</feature>
<feature type="transmembrane region" description="Helical" evidence="2">
    <location>
        <begin position="457"/>
        <end position="477"/>
    </location>
</feature>
<feature type="transmembrane region" description="Helical" evidence="2">
    <location>
        <begin position="483"/>
        <end position="503"/>
    </location>
</feature>
<proteinExistence type="inferred from homology"/>
<protein>
    <recommendedName>
        <fullName>Multidrug resistance protein MdtO</fullName>
    </recommendedName>
</protein>
<keyword id="KW-0046">Antibiotic resistance</keyword>
<keyword id="KW-0997">Cell inner membrane</keyword>
<keyword id="KW-1003">Cell membrane</keyword>
<keyword id="KW-0472">Membrane</keyword>
<keyword id="KW-1185">Reference proteome</keyword>
<keyword id="KW-0812">Transmembrane</keyword>
<keyword id="KW-1133">Transmembrane helix</keyword>
<keyword id="KW-0813">Transport</keyword>
<name>MDTO_ECOL6</name>
<evidence type="ECO:0000250" key="1"/>
<evidence type="ECO:0000255" key="2"/>
<evidence type="ECO:0000305" key="3"/>
<accession>Q8FAX2</accession>
<sequence length="683" mass="76268">MSALNSLPLPVVRLLAFFHEELSERRPGRVPQTMQLWVGCLLVILISMTFEIPFVALSLAVLFYGIQSNAFYTKFVAILFVVATVLEIASLFLIYKWSYGEPLIRLIIAGPILMSCMFLMRTHRLGLVFFAVAIVAIYGQTFPAMLDYPEAVVRLTLWCIVVGLYPTLLMTLIGVLWFPSRAITQMHQALNDRLDDAISHLTDSLAPLPETRIEREALALQKLNVFCLADDANWRTQSAWWQSCVATVTYIYSTLNRYDPTSFADSQAIIEFRQKLASEINKLQHSITEGQCWQSDWRISESEAMTARECNLENICQTLLQLGQMDPNTPPTPAAKPPSMVADAFTNPDYMRYAVKTLLACLICYTFYSGVDWEGIHTCMLTCVIVANPNVGSSYQKMVLRFGGAFCGAILALLFTLLVMPWLDNIVELLFVLAPIFLLGAWIATSSERSSYIGTQMVVTFALATLENVFGPVYDLVEIRDRALGIIIGTVVSAVIYTFVWPESEARTLPQKLAGALGMLSKVMRIPRQQEVTALRTYLHIRIGLHAAFNACEEMCQRVVLERQLDSEERALLIERSQTVIRQGRDILHAWDATWNSAQALDNALQPDRAGQFADALEKYAAGVATALSHSPQITLEETSASQAILPTLLKQEQHVCQLFARLPDWTAPALTPATEQAQGATQ</sequence>
<dbReference type="EMBL" id="AE014075">
    <property type="protein sequence ID" value="AAN83511.1"/>
    <property type="molecule type" value="Genomic_DNA"/>
</dbReference>
<dbReference type="RefSeq" id="WP_001275175.1">
    <property type="nucleotide sequence ID" value="NZ_CP051263.1"/>
</dbReference>
<dbReference type="STRING" id="199310.c5086"/>
<dbReference type="KEGG" id="ecc:c5086"/>
<dbReference type="eggNOG" id="COG1289">
    <property type="taxonomic scope" value="Bacteria"/>
</dbReference>
<dbReference type="HOGENOM" id="CLU_023392_1_0_6"/>
<dbReference type="BioCyc" id="ECOL199310:C5086-MONOMER"/>
<dbReference type="Proteomes" id="UP000001410">
    <property type="component" value="Chromosome"/>
</dbReference>
<dbReference type="GO" id="GO:0005886">
    <property type="term" value="C:plasma membrane"/>
    <property type="evidence" value="ECO:0007669"/>
    <property type="project" value="UniProtKB-SubCell"/>
</dbReference>
<dbReference type="GO" id="GO:0022857">
    <property type="term" value="F:transmembrane transporter activity"/>
    <property type="evidence" value="ECO:0007669"/>
    <property type="project" value="InterPro"/>
</dbReference>
<dbReference type="GO" id="GO:0046677">
    <property type="term" value="P:response to antibiotic"/>
    <property type="evidence" value="ECO:0007669"/>
    <property type="project" value="UniProtKB-KW"/>
</dbReference>
<dbReference type="InterPro" id="IPR006726">
    <property type="entry name" value="PHBA_efflux_AaeB/fusaric-R"/>
</dbReference>
<dbReference type="NCBIfam" id="NF008510">
    <property type="entry name" value="PRK11427.1"/>
    <property type="match status" value="1"/>
</dbReference>
<dbReference type="PANTHER" id="PTHR30509:SF9">
    <property type="entry name" value="MULTIDRUG RESISTANCE PROTEIN MDTO"/>
    <property type="match status" value="1"/>
</dbReference>
<dbReference type="PANTHER" id="PTHR30509">
    <property type="entry name" value="P-HYDROXYBENZOIC ACID EFFLUX PUMP SUBUNIT-RELATED"/>
    <property type="match status" value="1"/>
</dbReference>
<dbReference type="Pfam" id="PF04632">
    <property type="entry name" value="FUSC"/>
    <property type="match status" value="1"/>
</dbReference>
<gene>
    <name type="primary">mdtO</name>
    <name type="ordered locus">c5086</name>
</gene>
<reference key="1">
    <citation type="journal article" date="2002" name="Proc. Natl. Acad. Sci. U.S.A.">
        <title>Extensive mosaic structure revealed by the complete genome sequence of uropathogenic Escherichia coli.</title>
        <authorList>
            <person name="Welch R.A."/>
            <person name="Burland V."/>
            <person name="Plunkett G. III"/>
            <person name="Redford P."/>
            <person name="Roesch P."/>
            <person name="Rasko D."/>
            <person name="Buckles E.L."/>
            <person name="Liou S.-R."/>
            <person name="Boutin A."/>
            <person name="Hackett J."/>
            <person name="Stroud D."/>
            <person name="Mayhew G.F."/>
            <person name="Rose D.J."/>
            <person name="Zhou S."/>
            <person name="Schwartz D.C."/>
            <person name="Perna N.T."/>
            <person name="Mobley H.L.T."/>
            <person name="Donnenberg M.S."/>
            <person name="Blattner F.R."/>
        </authorList>
    </citation>
    <scope>NUCLEOTIDE SEQUENCE [LARGE SCALE GENOMIC DNA]</scope>
    <source>
        <strain>CFT073 / ATCC 700928 / UPEC</strain>
    </source>
</reference>
<organism>
    <name type="scientific">Escherichia coli O6:H1 (strain CFT073 / ATCC 700928 / UPEC)</name>
    <dbReference type="NCBI Taxonomy" id="199310"/>
    <lineage>
        <taxon>Bacteria</taxon>
        <taxon>Pseudomonadati</taxon>
        <taxon>Pseudomonadota</taxon>
        <taxon>Gammaproteobacteria</taxon>
        <taxon>Enterobacterales</taxon>
        <taxon>Enterobacteriaceae</taxon>
        <taxon>Escherichia</taxon>
    </lineage>
</organism>
<comment type="function">
    <text evidence="1">Could be involved in resistance to puromycin, acriflavine and tetraphenylarsonium chloride.</text>
</comment>
<comment type="subunit">
    <text evidence="1">Could be part of a tripartite efflux system composed of MdtN, MdtO and MdtP.</text>
</comment>
<comment type="subcellular location">
    <subcellularLocation>
        <location evidence="1">Cell inner membrane</location>
        <topology evidence="1">Multi-pass membrane protein</topology>
    </subcellularLocation>
</comment>
<comment type="similarity">
    <text evidence="3">Belongs to the MdtO family.</text>
</comment>